<organism>
    <name type="scientific">Aspergillus flavus (strain ATCC 200026 / FGSC A1120 / IAM 13836 / NRRL 3357 / JCM 12722 / SRRC 167)</name>
    <dbReference type="NCBI Taxonomy" id="332952"/>
    <lineage>
        <taxon>Eukaryota</taxon>
        <taxon>Fungi</taxon>
        <taxon>Dikarya</taxon>
        <taxon>Ascomycota</taxon>
        <taxon>Pezizomycotina</taxon>
        <taxon>Eurotiomycetes</taxon>
        <taxon>Eurotiomycetidae</taxon>
        <taxon>Eurotiales</taxon>
        <taxon>Aspergillaceae</taxon>
        <taxon>Aspergillus</taxon>
        <taxon>Aspergillus subgen. Circumdati</taxon>
    </lineage>
</organism>
<sequence length="161" mass="18465">MATPTLTFTSSDGVDIPVERDVAERSQLIKNMLEDLGETGEPIPIPNVNEAVLKKVIEWCTHHKNDPPSTGDDDDSRRKTTDIDEWDQKFMQVDQEMLFEIILAANYLDIKGLLDVGCKTVANMIKGKSPEEIRKTFNIQNDFTPEEEDQIRRENEWAEDR</sequence>
<evidence type="ECO:0000250" key="1"/>
<evidence type="ECO:0000305" key="2"/>
<comment type="function">
    <text evidence="1">Essential component of the SCF (SKP1-CUL1-F-box protein) E3 ubiquitin ligase complexes, which mediate the ubiquitination and subsequent proteasomal degradation of target proteins. Controls sulfur metabolite repression, probably by mediating the inactivation or degradation of the metR transcription factor (By similarity).</text>
</comment>
<comment type="pathway">
    <text>Protein modification; protein ubiquitination.</text>
</comment>
<comment type="subunit">
    <text evidence="1">Component of the SCF (SKP1-CUL1-F-box protein) E3 ubiquitin ligase complexes.</text>
</comment>
<comment type="similarity">
    <text evidence="2">Belongs to the SKP1 family.</text>
</comment>
<name>SKP1_ASPFN</name>
<keyword id="KW-0833">Ubl conjugation pathway</keyword>
<gene>
    <name type="primary">sconC</name>
    <name type="synonym">skpA</name>
    <name type="ORF">AFLA_048530</name>
</gene>
<proteinExistence type="inferred from homology"/>
<reference key="1">
    <citation type="journal article" date="2015" name="Genome Announc.">
        <title>Genome sequence of Aspergillus flavus NRRL 3357, a strain that causes aflatoxin contamination of food and feed.</title>
        <authorList>
            <person name="Nierman W.C."/>
            <person name="Yu J."/>
            <person name="Fedorova-Abrams N.D."/>
            <person name="Losada L."/>
            <person name="Cleveland T.E."/>
            <person name="Bhatnagar D."/>
            <person name="Bennett J.W."/>
            <person name="Dean R."/>
            <person name="Payne G.A."/>
        </authorList>
    </citation>
    <scope>NUCLEOTIDE SEQUENCE [LARGE SCALE GENOMIC DNA]</scope>
    <source>
        <strain>ATCC 200026 / FGSC A1120 / IAM 13836 / NRRL 3357 / JCM 12722 / SRRC 167</strain>
    </source>
</reference>
<feature type="chain" id="PRO_0000397262" description="E3 ubiquitin ligase complex SCF subunit sconC">
    <location>
        <begin position="1"/>
        <end position="161"/>
    </location>
</feature>
<feature type="region of interest" description="Interaction with the F-box domain of F-box proteins" evidence="1">
    <location>
        <begin position="102"/>
        <end position="161"/>
    </location>
</feature>
<protein>
    <recommendedName>
        <fullName>E3 ubiquitin ligase complex SCF subunit sconC</fullName>
    </recommendedName>
    <alternativeName>
        <fullName>Sulfur controller C</fullName>
    </alternativeName>
    <alternativeName>
        <fullName>Sulfur metabolite repression control protein C</fullName>
    </alternativeName>
</protein>
<dbReference type="EMBL" id="EQ963483">
    <property type="protein sequence ID" value="EED46800.1"/>
    <property type="molecule type" value="Genomic_DNA"/>
</dbReference>
<dbReference type="RefSeq" id="XP_002382980.1">
    <property type="nucleotide sequence ID" value="XM_002382939.1"/>
</dbReference>
<dbReference type="SMR" id="B8NSJ0"/>
<dbReference type="STRING" id="332952.B8NSJ0"/>
<dbReference type="EnsemblFungi" id="EED46800">
    <property type="protein sequence ID" value="EED46800"/>
    <property type="gene ID" value="AFLA_048530"/>
</dbReference>
<dbReference type="VEuPathDB" id="FungiDB:AFLA_010718"/>
<dbReference type="eggNOG" id="KOG1724">
    <property type="taxonomic scope" value="Eukaryota"/>
</dbReference>
<dbReference type="HOGENOM" id="CLU_059252_4_0_1"/>
<dbReference type="OMA" id="DKYTASM"/>
<dbReference type="UniPathway" id="UPA00143"/>
<dbReference type="GO" id="GO:0031518">
    <property type="term" value="C:CBF3 complex"/>
    <property type="evidence" value="ECO:0007669"/>
    <property type="project" value="EnsemblFungi"/>
</dbReference>
<dbReference type="GO" id="GO:0000776">
    <property type="term" value="C:kinetochore"/>
    <property type="evidence" value="ECO:0007669"/>
    <property type="project" value="EnsemblFungi"/>
</dbReference>
<dbReference type="GO" id="GO:0043224">
    <property type="term" value="C:nuclear SCF ubiquitin ligase complex"/>
    <property type="evidence" value="ECO:0007669"/>
    <property type="project" value="EnsemblFungi"/>
</dbReference>
<dbReference type="GO" id="GO:0043291">
    <property type="term" value="C:RAVE complex"/>
    <property type="evidence" value="ECO:0007669"/>
    <property type="project" value="EnsemblFungi"/>
</dbReference>
<dbReference type="GO" id="GO:0017117">
    <property type="term" value="C:single-stranded DNA-dependent ATP-dependent DNA helicase complex"/>
    <property type="evidence" value="ECO:0007669"/>
    <property type="project" value="EnsemblFungi"/>
</dbReference>
<dbReference type="GO" id="GO:0003688">
    <property type="term" value="F:DNA replication origin binding"/>
    <property type="evidence" value="ECO:0007669"/>
    <property type="project" value="EnsemblFungi"/>
</dbReference>
<dbReference type="GO" id="GO:0061630">
    <property type="term" value="F:ubiquitin protein ligase activity"/>
    <property type="evidence" value="ECO:0007669"/>
    <property type="project" value="EnsemblFungi"/>
</dbReference>
<dbReference type="GO" id="GO:0010458">
    <property type="term" value="P:exit from mitosis"/>
    <property type="evidence" value="ECO:0007669"/>
    <property type="project" value="EnsemblFungi"/>
</dbReference>
<dbReference type="GO" id="GO:0000082">
    <property type="term" value="P:G1/S transition of mitotic cell cycle"/>
    <property type="evidence" value="ECO:0007669"/>
    <property type="project" value="EnsemblFungi"/>
</dbReference>
<dbReference type="GO" id="GO:0000086">
    <property type="term" value="P:G2/M transition of mitotic cell cycle"/>
    <property type="evidence" value="ECO:0007669"/>
    <property type="project" value="EnsemblFungi"/>
</dbReference>
<dbReference type="GO" id="GO:0051382">
    <property type="term" value="P:kinetochore assembly"/>
    <property type="evidence" value="ECO:0007669"/>
    <property type="project" value="EnsemblFungi"/>
</dbReference>
<dbReference type="GO" id="GO:0101026">
    <property type="term" value="P:mitotic nuclear membrane biogenesis"/>
    <property type="evidence" value="ECO:0007669"/>
    <property type="project" value="EnsemblFungi"/>
</dbReference>
<dbReference type="GO" id="GO:2000766">
    <property type="term" value="P:negative regulation of cytoplasmic translation"/>
    <property type="evidence" value="ECO:0007669"/>
    <property type="project" value="EnsemblFungi"/>
</dbReference>
<dbReference type="GO" id="GO:0045841">
    <property type="term" value="P:negative regulation of mitotic metaphase/anaphase transition"/>
    <property type="evidence" value="ECO:0007669"/>
    <property type="project" value="EnsemblFungi"/>
</dbReference>
<dbReference type="GO" id="GO:0010828">
    <property type="term" value="P:positive regulation of D-glucose transmembrane transport"/>
    <property type="evidence" value="ECO:0007669"/>
    <property type="project" value="EnsemblFungi"/>
</dbReference>
<dbReference type="GO" id="GO:0045116">
    <property type="term" value="P:protein neddylation"/>
    <property type="evidence" value="ECO:0007669"/>
    <property type="project" value="EnsemblFungi"/>
</dbReference>
<dbReference type="GO" id="GO:0016567">
    <property type="term" value="P:protein ubiquitination"/>
    <property type="evidence" value="ECO:0007669"/>
    <property type="project" value="UniProtKB-UniPathway"/>
</dbReference>
<dbReference type="GO" id="GO:0000018">
    <property type="term" value="P:regulation of DNA recombination"/>
    <property type="evidence" value="ECO:0007669"/>
    <property type="project" value="EnsemblFungi"/>
</dbReference>
<dbReference type="GO" id="GO:0007096">
    <property type="term" value="P:regulation of exit from mitosis"/>
    <property type="evidence" value="ECO:0007669"/>
    <property type="project" value="EnsemblFungi"/>
</dbReference>
<dbReference type="GO" id="GO:0043254">
    <property type="term" value="P:regulation of protein-containing complex assembly"/>
    <property type="evidence" value="ECO:0007669"/>
    <property type="project" value="EnsemblFungi"/>
</dbReference>
<dbReference type="GO" id="GO:0000712">
    <property type="term" value="P:resolution of meiotic recombination intermediates"/>
    <property type="evidence" value="ECO:0007669"/>
    <property type="project" value="EnsemblFungi"/>
</dbReference>
<dbReference type="GO" id="GO:0031146">
    <property type="term" value="P:SCF-dependent proteasomal ubiquitin-dependent protein catabolic process"/>
    <property type="evidence" value="ECO:0007669"/>
    <property type="project" value="EnsemblFungi"/>
</dbReference>
<dbReference type="GO" id="GO:0000921">
    <property type="term" value="P:septin ring assembly"/>
    <property type="evidence" value="ECO:0007669"/>
    <property type="project" value="EnsemblFungi"/>
</dbReference>
<dbReference type="GO" id="GO:0030466">
    <property type="term" value="P:silent mating-type cassette heterochromatin formation"/>
    <property type="evidence" value="ECO:0007669"/>
    <property type="project" value="EnsemblFungi"/>
</dbReference>
<dbReference type="GO" id="GO:0007035">
    <property type="term" value="P:vacuolar acidification"/>
    <property type="evidence" value="ECO:0007669"/>
    <property type="project" value="EnsemblFungi"/>
</dbReference>
<dbReference type="GO" id="GO:0070072">
    <property type="term" value="P:vacuolar proton-transporting V-type ATPase complex assembly"/>
    <property type="evidence" value="ECO:0007669"/>
    <property type="project" value="EnsemblFungi"/>
</dbReference>
<dbReference type="CDD" id="cd18322">
    <property type="entry name" value="BTB_POZ_SKP1"/>
    <property type="match status" value="1"/>
</dbReference>
<dbReference type="FunFam" id="3.30.710.10:FF:000026">
    <property type="entry name" value="E3 ubiquitin ligase complex SCF subunit"/>
    <property type="match status" value="1"/>
</dbReference>
<dbReference type="Gene3D" id="3.30.710.10">
    <property type="entry name" value="Potassium Channel Kv1.1, Chain A"/>
    <property type="match status" value="1"/>
</dbReference>
<dbReference type="InterPro" id="IPR016897">
    <property type="entry name" value="SKP1"/>
</dbReference>
<dbReference type="InterPro" id="IPR001232">
    <property type="entry name" value="SKP1-like"/>
</dbReference>
<dbReference type="InterPro" id="IPR036296">
    <property type="entry name" value="SKP1-like_dim_sf"/>
</dbReference>
<dbReference type="InterPro" id="IPR011333">
    <property type="entry name" value="SKP1/BTB/POZ_sf"/>
</dbReference>
<dbReference type="InterPro" id="IPR016072">
    <property type="entry name" value="Skp1_comp_dimer"/>
</dbReference>
<dbReference type="InterPro" id="IPR016073">
    <property type="entry name" value="Skp1_comp_POZ"/>
</dbReference>
<dbReference type="PANTHER" id="PTHR11165">
    <property type="entry name" value="SKP1"/>
    <property type="match status" value="1"/>
</dbReference>
<dbReference type="Pfam" id="PF01466">
    <property type="entry name" value="Skp1"/>
    <property type="match status" value="1"/>
</dbReference>
<dbReference type="Pfam" id="PF03931">
    <property type="entry name" value="Skp1_POZ"/>
    <property type="match status" value="1"/>
</dbReference>
<dbReference type="PIRSF" id="PIRSF028729">
    <property type="entry name" value="E3_ubiquit_lig_SCF_Skp"/>
    <property type="match status" value="1"/>
</dbReference>
<dbReference type="SMART" id="SM00512">
    <property type="entry name" value="Skp1"/>
    <property type="match status" value="1"/>
</dbReference>
<dbReference type="SUPFAM" id="SSF54695">
    <property type="entry name" value="POZ domain"/>
    <property type="match status" value="1"/>
</dbReference>
<dbReference type="SUPFAM" id="SSF81382">
    <property type="entry name" value="Skp1 dimerisation domain-like"/>
    <property type="match status" value="1"/>
</dbReference>
<accession>B8NSJ0</accession>